<gene>
    <name evidence="1" type="primary">argS</name>
    <name type="ordered locus">SFV_1914</name>
</gene>
<reference key="1">
    <citation type="journal article" date="2006" name="BMC Genomics">
        <title>Complete genome sequence of Shigella flexneri 5b and comparison with Shigella flexneri 2a.</title>
        <authorList>
            <person name="Nie H."/>
            <person name="Yang F."/>
            <person name="Zhang X."/>
            <person name="Yang J."/>
            <person name="Chen L."/>
            <person name="Wang J."/>
            <person name="Xiong Z."/>
            <person name="Peng J."/>
            <person name="Sun L."/>
            <person name="Dong J."/>
            <person name="Xue Y."/>
            <person name="Xu X."/>
            <person name="Chen S."/>
            <person name="Yao Z."/>
            <person name="Shen Y."/>
            <person name="Jin Q."/>
        </authorList>
    </citation>
    <scope>NUCLEOTIDE SEQUENCE [LARGE SCALE GENOMIC DNA]</scope>
    <source>
        <strain>8401</strain>
    </source>
</reference>
<sequence>MNIQALLSEKVRQAMIAAGAPADCEPQIRQSAKVQFGDYQANGMMAVAKKLGMAPRQLAEQVLTHLDLNGIASKVEIAGPGFINIFLDPAFLAEHVQQALASDRLGVATPEKQTIVVDYSAPNVAKEMHVGHLRSTIIGDTAVRTLEFLGHKVIRANHVGDWGTQFGMLIAWLEKQQQENAGEMELADLEGFYRDAKKHYDEDEEFAERARNYVVKLQSGDEYFREMWRKLVDITMTQNQITYDRLNVTLTRDDVMGESLYNPMLPGIVADLKAKGLAVESEGATVVFLDEFKNKEGEPMGVIIQKKDGGYLYTTTDIACAKYRYETLHADRVLYYIDSRQHQHLMQAWAIVRKAGYVPESVPLEHHMFGMMLGKDGKPFKTRAGGTVKLADLLDEALERARRLVAEKNPYMPADELEKLANAVGIGAVKYADLSKNRTTDYIFDWDNMLAFEGNTAPYMQYAYTRVLSVFRKAEINEEQLAAAPVIIREDREAQLAARLLQFEETLTVVAREGTPHVMCAYLYDLAGLFSGFYEHCPILSAENEEVRNSRLKLAQLTAKTLKLGLDTLGIETVERM</sequence>
<protein>
    <recommendedName>
        <fullName evidence="1">Arginine--tRNA ligase</fullName>
        <ecNumber evidence="1">6.1.1.19</ecNumber>
    </recommendedName>
    <alternativeName>
        <fullName evidence="1">Arginyl-tRNA synthetase</fullName>
        <shortName evidence="1">ArgRS</shortName>
    </alternativeName>
</protein>
<name>SYR_SHIF8</name>
<comment type="catalytic activity">
    <reaction evidence="1">
        <text>tRNA(Arg) + L-arginine + ATP = L-arginyl-tRNA(Arg) + AMP + diphosphate</text>
        <dbReference type="Rhea" id="RHEA:20301"/>
        <dbReference type="Rhea" id="RHEA-COMP:9658"/>
        <dbReference type="Rhea" id="RHEA-COMP:9673"/>
        <dbReference type="ChEBI" id="CHEBI:30616"/>
        <dbReference type="ChEBI" id="CHEBI:32682"/>
        <dbReference type="ChEBI" id="CHEBI:33019"/>
        <dbReference type="ChEBI" id="CHEBI:78442"/>
        <dbReference type="ChEBI" id="CHEBI:78513"/>
        <dbReference type="ChEBI" id="CHEBI:456215"/>
        <dbReference type="EC" id="6.1.1.19"/>
    </reaction>
</comment>
<comment type="subunit">
    <text evidence="1">Monomer.</text>
</comment>
<comment type="subcellular location">
    <subcellularLocation>
        <location evidence="1">Cytoplasm</location>
    </subcellularLocation>
</comment>
<comment type="similarity">
    <text evidence="1">Belongs to the class-I aminoacyl-tRNA synthetase family.</text>
</comment>
<proteinExistence type="inferred from homology"/>
<feature type="chain" id="PRO_1000018122" description="Arginine--tRNA ligase">
    <location>
        <begin position="1"/>
        <end position="577"/>
    </location>
</feature>
<feature type="short sequence motif" description="'HIGH' region">
    <location>
        <begin position="122"/>
        <end position="132"/>
    </location>
</feature>
<evidence type="ECO:0000255" key="1">
    <source>
        <dbReference type="HAMAP-Rule" id="MF_00123"/>
    </source>
</evidence>
<accession>Q0T3Q1</accession>
<organism>
    <name type="scientific">Shigella flexneri serotype 5b (strain 8401)</name>
    <dbReference type="NCBI Taxonomy" id="373384"/>
    <lineage>
        <taxon>Bacteria</taxon>
        <taxon>Pseudomonadati</taxon>
        <taxon>Pseudomonadota</taxon>
        <taxon>Gammaproteobacteria</taxon>
        <taxon>Enterobacterales</taxon>
        <taxon>Enterobacteriaceae</taxon>
        <taxon>Shigella</taxon>
    </lineage>
</organism>
<dbReference type="EC" id="6.1.1.19" evidence="1"/>
<dbReference type="EMBL" id="CP000266">
    <property type="protein sequence ID" value="ABF04064.1"/>
    <property type="molecule type" value="Genomic_DNA"/>
</dbReference>
<dbReference type="RefSeq" id="WP_001025296.1">
    <property type="nucleotide sequence ID" value="NC_008258.1"/>
</dbReference>
<dbReference type="SMR" id="Q0T3Q1"/>
<dbReference type="KEGG" id="sfv:SFV_1914"/>
<dbReference type="HOGENOM" id="CLU_006406_5_1_6"/>
<dbReference type="Proteomes" id="UP000000659">
    <property type="component" value="Chromosome"/>
</dbReference>
<dbReference type="GO" id="GO:0005737">
    <property type="term" value="C:cytoplasm"/>
    <property type="evidence" value="ECO:0007669"/>
    <property type="project" value="UniProtKB-SubCell"/>
</dbReference>
<dbReference type="GO" id="GO:0004814">
    <property type="term" value="F:arginine-tRNA ligase activity"/>
    <property type="evidence" value="ECO:0007669"/>
    <property type="project" value="UniProtKB-UniRule"/>
</dbReference>
<dbReference type="GO" id="GO:0005524">
    <property type="term" value="F:ATP binding"/>
    <property type="evidence" value="ECO:0007669"/>
    <property type="project" value="UniProtKB-UniRule"/>
</dbReference>
<dbReference type="GO" id="GO:0006420">
    <property type="term" value="P:arginyl-tRNA aminoacylation"/>
    <property type="evidence" value="ECO:0007669"/>
    <property type="project" value="UniProtKB-UniRule"/>
</dbReference>
<dbReference type="CDD" id="cd07956">
    <property type="entry name" value="Anticodon_Ia_Arg"/>
    <property type="match status" value="1"/>
</dbReference>
<dbReference type="CDD" id="cd00671">
    <property type="entry name" value="ArgRS_core"/>
    <property type="match status" value="1"/>
</dbReference>
<dbReference type="FunFam" id="1.10.730.10:FF:000001">
    <property type="entry name" value="Arginine--tRNA ligase"/>
    <property type="match status" value="1"/>
</dbReference>
<dbReference type="FunFam" id="3.30.1360.70:FF:000001">
    <property type="entry name" value="Arginine--tRNA ligase"/>
    <property type="match status" value="1"/>
</dbReference>
<dbReference type="FunFam" id="3.40.50.620:FF:000030">
    <property type="entry name" value="Arginine--tRNA ligase"/>
    <property type="match status" value="1"/>
</dbReference>
<dbReference type="Gene3D" id="3.30.1360.70">
    <property type="entry name" value="Arginyl tRNA synthetase N-terminal domain"/>
    <property type="match status" value="1"/>
</dbReference>
<dbReference type="Gene3D" id="3.40.50.620">
    <property type="entry name" value="HUPs"/>
    <property type="match status" value="1"/>
</dbReference>
<dbReference type="Gene3D" id="1.10.730.10">
    <property type="entry name" value="Isoleucyl-tRNA Synthetase, Domain 1"/>
    <property type="match status" value="1"/>
</dbReference>
<dbReference type="HAMAP" id="MF_00123">
    <property type="entry name" value="Arg_tRNA_synth"/>
    <property type="match status" value="1"/>
</dbReference>
<dbReference type="InterPro" id="IPR001412">
    <property type="entry name" value="aa-tRNA-synth_I_CS"/>
</dbReference>
<dbReference type="InterPro" id="IPR001278">
    <property type="entry name" value="Arg-tRNA-ligase"/>
</dbReference>
<dbReference type="InterPro" id="IPR005148">
    <property type="entry name" value="Arg-tRNA-synth_N"/>
</dbReference>
<dbReference type="InterPro" id="IPR036695">
    <property type="entry name" value="Arg-tRNA-synth_N_sf"/>
</dbReference>
<dbReference type="InterPro" id="IPR035684">
    <property type="entry name" value="ArgRS_core"/>
</dbReference>
<dbReference type="InterPro" id="IPR008909">
    <property type="entry name" value="DALR_anticod-bd"/>
</dbReference>
<dbReference type="InterPro" id="IPR014729">
    <property type="entry name" value="Rossmann-like_a/b/a_fold"/>
</dbReference>
<dbReference type="InterPro" id="IPR009080">
    <property type="entry name" value="tRNAsynth_Ia_anticodon-bd"/>
</dbReference>
<dbReference type="NCBIfam" id="TIGR00456">
    <property type="entry name" value="argS"/>
    <property type="match status" value="1"/>
</dbReference>
<dbReference type="PANTHER" id="PTHR11956:SF5">
    <property type="entry name" value="ARGININE--TRNA LIGASE, CYTOPLASMIC"/>
    <property type="match status" value="1"/>
</dbReference>
<dbReference type="PANTHER" id="PTHR11956">
    <property type="entry name" value="ARGINYL-TRNA SYNTHETASE"/>
    <property type="match status" value="1"/>
</dbReference>
<dbReference type="Pfam" id="PF03485">
    <property type="entry name" value="Arg_tRNA_synt_N"/>
    <property type="match status" value="1"/>
</dbReference>
<dbReference type="Pfam" id="PF05746">
    <property type="entry name" value="DALR_1"/>
    <property type="match status" value="1"/>
</dbReference>
<dbReference type="Pfam" id="PF00750">
    <property type="entry name" value="tRNA-synt_1d"/>
    <property type="match status" value="1"/>
</dbReference>
<dbReference type="PRINTS" id="PR01038">
    <property type="entry name" value="TRNASYNTHARG"/>
</dbReference>
<dbReference type="SMART" id="SM01016">
    <property type="entry name" value="Arg_tRNA_synt_N"/>
    <property type="match status" value="1"/>
</dbReference>
<dbReference type="SMART" id="SM00836">
    <property type="entry name" value="DALR_1"/>
    <property type="match status" value="1"/>
</dbReference>
<dbReference type="SUPFAM" id="SSF47323">
    <property type="entry name" value="Anticodon-binding domain of a subclass of class I aminoacyl-tRNA synthetases"/>
    <property type="match status" value="1"/>
</dbReference>
<dbReference type="SUPFAM" id="SSF55190">
    <property type="entry name" value="Arginyl-tRNA synthetase (ArgRS), N-terminal 'additional' domain"/>
    <property type="match status" value="1"/>
</dbReference>
<dbReference type="SUPFAM" id="SSF52374">
    <property type="entry name" value="Nucleotidylyl transferase"/>
    <property type="match status" value="1"/>
</dbReference>
<dbReference type="PROSITE" id="PS00178">
    <property type="entry name" value="AA_TRNA_LIGASE_I"/>
    <property type="match status" value="1"/>
</dbReference>
<keyword id="KW-0030">Aminoacyl-tRNA synthetase</keyword>
<keyword id="KW-0067">ATP-binding</keyword>
<keyword id="KW-0963">Cytoplasm</keyword>
<keyword id="KW-0436">Ligase</keyword>
<keyword id="KW-0547">Nucleotide-binding</keyword>
<keyword id="KW-0648">Protein biosynthesis</keyword>